<sequence>MTNPLSDASSRVGSGLRIGVLALQGDFREHIHAVEAAGATGVGIRRPSELDDIDGLIIPGGESTTIDKLSRIFEVRDPLQKRIAEGLPVYGSCAGMILLADEIADPATDLDGNPQQTFGGLDITVRRNAFGRQRESFETDLDFKGLDFSAGESGVDPVHAVFIRGPWVERVGSGVEVLAQVDPDHASHTATLHGVARIVAVRSGQLLATSFHPEVTGEKRVHELFIRMIRGEA</sequence>
<reference key="1">
    <citation type="journal article" date="2006" name="PLoS Genet.">
        <title>Secrets of soil survival revealed by the genome sequence of Arthrobacter aurescens TC1.</title>
        <authorList>
            <person name="Mongodin E.F."/>
            <person name="Shapir N."/>
            <person name="Daugherty S.C."/>
            <person name="DeBoy R.T."/>
            <person name="Emerson J.B."/>
            <person name="Shvartzbeyn A."/>
            <person name="Radune D."/>
            <person name="Vamathevan J."/>
            <person name="Riggs F."/>
            <person name="Grinberg V."/>
            <person name="Khouri H.M."/>
            <person name="Wackett L.P."/>
            <person name="Nelson K.E."/>
            <person name="Sadowsky M.J."/>
        </authorList>
    </citation>
    <scope>NUCLEOTIDE SEQUENCE [LARGE SCALE GENOMIC DNA]</scope>
    <source>
        <strain>TC1</strain>
    </source>
</reference>
<name>PDXT_PAEAT</name>
<gene>
    <name evidence="1" type="primary">pdxT</name>
    <name type="ordered locus">AAur_2301</name>
</gene>
<feature type="chain" id="PRO_0000292991" description="Pyridoxal 5'-phosphate synthase subunit PdxT">
    <location>
        <begin position="1"/>
        <end position="233"/>
    </location>
</feature>
<feature type="active site" description="Nucleophile" evidence="1">
    <location>
        <position position="93"/>
    </location>
</feature>
<feature type="active site" description="Charge relay system" evidence="1">
    <location>
        <position position="212"/>
    </location>
</feature>
<feature type="active site" description="Charge relay system" evidence="1">
    <location>
        <position position="214"/>
    </location>
</feature>
<feature type="binding site" evidence="1">
    <location>
        <begin position="61"/>
        <end position="63"/>
    </location>
    <ligand>
        <name>L-glutamine</name>
        <dbReference type="ChEBI" id="CHEBI:58359"/>
    </ligand>
</feature>
<feature type="binding site" evidence="1">
    <location>
        <position position="127"/>
    </location>
    <ligand>
        <name>L-glutamine</name>
        <dbReference type="ChEBI" id="CHEBI:58359"/>
    </ligand>
</feature>
<feature type="binding site" evidence="1">
    <location>
        <begin position="163"/>
        <end position="164"/>
    </location>
    <ligand>
        <name>L-glutamine</name>
        <dbReference type="ChEBI" id="CHEBI:58359"/>
    </ligand>
</feature>
<organism>
    <name type="scientific">Paenarthrobacter aurescens (strain TC1)</name>
    <dbReference type="NCBI Taxonomy" id="290340"/>
    <lineage>
        <taxon>Bacteria</taxon>
        <taxon>Bacillati</taxon>
        <taxon>Actinomycetota</taxon>
        <taxon>Actinomycetes</taxon>
        <taxon>Micrococcales</taxon>
        <taxon>Micrococcaceae</taxon>
        <taxon>Paenarthrobacter</taxon>
    </lineage>
</organism>
<comment type="function">
    <text evidence="1">Catalyzes the hydrolysis of glutamine to glutamate and ammonia as part of the biosynthesis of pyridoxal 5'-phosphate. The resulting ammonia molecule is channeled to the active site of PdxS.</text>
</comment>
<comment type="catalytic activity">
    <reaction evidence="1">
        <text>aldehydo-D-ribose 5-phosphate + D-glyceraldehyde 3-phosphate + L-glutamine = pyridoxal 5'-phosphate + L-glutamate + phosphate + 3 H2O + H(+)</text>
        <dbReference type="Rhea" id="RHEA:31507"/>
        <dbReference type="ChEBI" id="CHEBI:15377"/>
        <dbReference type="ChEBI" id="CHEBI:15378"/>
        <dbReference type="ChEBI" id="CHEBI:29985"/>
        <dbReference type="ChEBI" id="CHEBI:43474"/>
        <dbReference type="ChEBI" id="CHEBI:58273"/>
        <dbReference type="ChEBI" id="CHEBI:58359"/>
        <dbReference type="ChEBI" id="CHEBI:59776"/>
        <dbReference type="ChEBI" id="CHEBI:597326"/>
        <dbReference type="EC" id="4.3.3.6"/>
    </reaction>
</comment>
<comment type="catalytic activity">
    <reaction evidence="1">
        <text>L-glutamine + H2O = L-glutamate + NH4(+)</text>
        <dbReference type="Rhea" id="RHEA:15889"/>
        <dbReference type="ChEBI" id="CHEBI:15377"/>
        <dbReference type="ChEBI" id="CHEBI:28938"/>
        <dbReference type="ChEBI" id="CHEBI:29985"/>
        <dbReference type="ChEBI" id="CHEBI:58359"/>
        <dbReference type="EC" id="3.5.1.2"/>
    </reaction>
</comment>
<comment type="pathway">
    <text evidence="1">Cofactor biosynthesis; pyridoxal 5'-phosphate biosynthesis.</text>
</comment>
<comment type="subunit">
    <text evidence="1">In the presence of PdxS, forms a dodecamer of heterodimers. Only shows activity in the heterodimer.</text>
</comment>
<comment type="similarity">
    <text evidence="1">Belongs to the glutaminase PdxT/SNO family.</text>
</comment>
<comment type="sequence caution" evidence="2">
    <conflict type="erroneous initiation">
        <sequence resource="EMBL-CDS" id="ABM09852"/>
    </conflict>
</comment>
<keyword id="KW-0315">Glutamine amidotransferase</keyword>
<keyword id="KW-0378">Hydrolase</keyword>
<keyword id="KW-0456">Lyase</keyword>
<keyword id="KW-0663">Pyridoxal phosphate</keyword>
<protein>
    <recommendedName>
        <fullName evidence="1">Pyridoxal 5'-phosphate synthase subunit PdxT</fullName>
        <ecNumber evidence="1">4.3.3.6</ecNumber>
    </recommendedName>
    <alternativeName>
        <fullName evidence="1">Pdx2</fullName>
    </alternativeName>
    <alternativeName>
        <fullName evidence="1">Pyridoxal 5'-phosphate synthase glutaminase subunit</fullName>
        <ecNumber evidence="1">3.5.1.2</ecNumber>
    </alternativeName>
</protein>
<evidence type="ECO:0000255" key="1">
    <source>
        <dbReference type="HAMAP-Rule" id="MF_01615"/>
    </source>
</evidence>
<evidence type="ECO:0000305" key="2"/>
<accession>A1R728</accession>
<proteinExistence type="inferred from homology"/>
<dbReference type="EC" id="4.3.3.6" evidence="1"/>
<dbReference type="EC" id="3.5.1.2" evidence="1"/>
<dbReference type="EMBL" id="CP000474">
    <property type="protein sequence ID" value="ABM09852.1"/>
    <property type="status" value="ALT_INIT"/>
    <property type="molecule type" value="Genomic_DNA"/>
</dbReference>
<dbReference type="RefSeq" id="WP_043806568.1">
    <property type="nucleotide sequence ID" value="NC_008711.1"/>
</dbReference>
<dbReference type="SMR" id="A1R728"/>
<dbReference type="STRING" id="290340.AAur_2301"/>
<dbReference type="MEROPS" id="C26.A32"/>
<dbReference type="KEGG" id="aau:AAur_2301"/>
<dbReference type="eggNOG" id="COG0311">
    <property type="taxonomic scope" value="Bacteria"/>
</dbReference>
<dbReference type="HOGENOM" id="CLU_069674_1_0_11"/>
<dbReference type="OrthoDB" id="9810320at2"/>
<dbReference type="UniPathway" id="UPA00245"/>
<dbReference type="Proteomes" id="UP000000637">
    <property type="component" value="Chromosome"/>
</dbReference>
<dbReference type="GO" id="GO:0005829">
    <property type="term" value="C:cytosol"/>
    <property type="evidence" value="ECO:0007669"/>
    <property type="project" value="TreeGrafter"/>
</dbReference>
<dbReference type="GO" id="GO:1903600">
    <property type="term" value="C:glutaminase complex"/>
    <property type="evidence" value="ECO:0007669"/>
    <property type="project" value="TreeGrafter"/>
</dbReference>
<dbReference type="GO" id="GO:0004359">
    <property type="term" value="F:glutaminase activity"/>
    <property type="evidence" value="ECO:0007669"/>
    <property type="project" value="UniProtKB-UniRule"/>
</dbReference>
<dbReference type="GO" id="GO:0036381">
    <property type="term" value="F:pyridoxal 5'-phosphate synthase (glutamine hydrolysing) activity"/>
    <property type="evidence" value="ECO:0007669"/>
    <property type="project" value="UniProtKB-UniRule"/>
</dbReference>
<dbReference type="GO" id="GO:0006543">
    <property type="term" value="P:glutamine catabolic process"/>
    <property type="evidence" value="ECO:0007669"/>
    <property type="project" value="UniProtKB-UniRule"/>
</dbReference>
<dbReference type="GO" id="GO:0042823">
    <property type="term" value="P:pyridoxal phosphate biosynthetic process"/>
    <property type="evidence" value="ECO:0007669"/>
    <property type="project" value="UniProtKB-UniRule"/>
</dbReference>
<dbReference type="GO" id="GO:0008614">
    <property type="term" value="P:pyridoxine metabolic process"/>
    <property type="evidence" value="ECO:0007669"/>
    <property type="project" value="TreeGrafter"/>
</dbReference>
<dbReference type="CDD" id="cd01749">
    <property type="entry name" value="GATase1_PB"/>
    <property type="match status" value="1"/>
</dbReference>
<dbReference type="FunFam" id="3.40.50.880:FF:000010">
    <property type="entry name" value="uncharacterized protein LOC100176842 isoform X2"/>
    <property type="match status" value="1"/>
</dbReference>
<dbReference type="Gene3D" id="3.40.50.880">
    <property type="match status" value="1"/>
</dbReference>
<dbReference type="HAMAP" id="MF_01615">
    <property type="entry name" value="PdxT"/>
    <property type="match status" value="1"/>
</dbReference>
<dbReference type="InterPro" id="IPR029062">
    <property type="entry name" value="Class_I_gatase-like"/>
</dbReference>
<dbReference type="InterPro" id="IPR002161">
    <property type="entry name" value="PdxT/SNO"/>
</dbReference>
<dbReference type="InterPro" id="IPR021196">
    <property type="entry name" value="PdxT/SNO_CS"/>
</dbReference>
<dbReference type="NCBIfam" id="TIGR03800">
    <property type="entry name" value="PLP_synth_Pdx2"/>
    <property type="match status" value="1"/>
</dbReference>
<dbReference type="PANTHER" id="PTHR31559">
    <property type="entry name" value="PYRIDOXAL 5'-PHOSPHATE SYNTHASE SUBUNIT SNO"/>
    <property type="match status" value="1"/>
</dbReference>
<dbReference type="PANTHER" id="PTHR31559:SF0">
    <property type="entry name" value="PYRIDOXAL 5'-PHOSPHATE SYNTHASE SUBUNIT SNO1-RELATED"/>
    <property type="match status" value="1"/>
</dbReference>
<dbReference type="Pfam" id="PF01174">
    <property type="entry name" value="SNO"/>
    <property type="match status" value="1"/>
</dbReference>
<dbReference type="PIRSF" id="PIRSF005639">
    <property type="entry name" value="Glut_amidoT_SNO"/>
    <property type="match status" value="1"/>
</dbReference>
<dbReference type="SUPFAM" id="SSF52317">
    <property type="entry name" value="Class I glutamine amidotransferase-like"/>
    <property type="match status" value="1"/>
</dbReference>
<dbReference type="PROSITE" id="PS01236">
    <property type="entry name" value="PDXT_SNO_1"/>
    <property type="match status" value="1"/>
</dbReference>
<dbReference type="PROSITE" id="PS51130">
    <property type="entry name" value="PDXT_SNO_2"/>
    <property type="match status" value="1"/>
</dbReference>